<accession>Q74AI3</accession>
<dbReference type="EC" id="4.2.1.20" evidence="1"/>
<dbReference type="EMBL" id="AE017180">
    <property type="protein sequence ID" value="AAR35745.1"/>
    <property type="molecule type" value="Genomic_DNA"/>
</dbReference>
<dbReference type="RefSeq" id="NP_953418.1">
    <property type="nucleotide sequence ID" value="NC_002939.5"/>
</dbReference>
<dbReference type="RefSeq" id="WP_010943006.1">
    <property type="nucleotide sequence ID" value="NC_002939.5"/>
</dbReference>
<dbReference type="SMR" id="Q74AI3"/>
<dbReference type="FunCoup" id="Q74AI3">
    <property type="interactions" value="549"/>
</dbReference>
<dbReference type="STRING" id="243231.GSU2371"/>
<dbReference type="EnsemblBacteria" id="AAR35745">
    <property type="protein sequence ID" value="AAR35745"/>
    <property type="gene ID" value="GSU2371"/>
</dbReference>
<dbReference type="KEGG" id="gsu:GSU2371"/>
<dbReference type="PATRIC" id="fig|243231.5.peg.2398"/>
<dbReference type="eggNOG" id="COG0159">
    <property type="taxonomic scope" value="Bacteria"/>
</dbReference>
<dbReference type="HOGENOM" id="CLU_016734_0_2_7"/>
<dbReference type="InParanoid" id="Q74AI3"/>
<dbReference type="OrthoDB" id="9804578at2"/>
<dbReference type="UniPathway" id="UPA00035">
    <property type="reaction ID" value="UER00044"/>
</dbReference>
<dbReference type="Proteomes" id="UP000000577">
    <property type="component" value="Chromosome"/>
</dbReference>
<dbReference type="GO" id="GO:0005829">
    <property type="term" value="C:cytosol"/>
    <property type="evidence" value="ECO:0000318"/>
    <property type="project" value="GO_Central"/>
</dbReference>
<dbReference type="GO" id="GO:0004834">
    <property type="term" value="F:tryptophan synthase activity"/>
    <property type="evidence" value="ECO:0000318"/>
    <property type="project" value="GO_Central"/>
</dbReference>
<dbReference type="GO" id="GO:0000162">
    <property type="term" value="P:L-tryptophan biosynthetic process"/>
    <property type="evidence" value="ECO:0000318"/>
    <property type="project" value="GO_Central"/>
</dbReference>
<dbReference type="CDD" id="cd04724">
    <property type="entry name" value="Tryptophan_synthase_alpha"/>
    <property type="match status" value="1"/>
</dbReference>
<dbReference type="FunFam" id="3.20.20.70:FF:000037">
    <property type="entry name" value="Tryptophan synthase alpha chain"/>
    <property type="match status" value="1"/>
</dbReference>
<dbReference type="Gene3D" id="3.20.20.70">
    <property type="entry name" value="Aldolase class I"/>
    <property type="match status" value="1"/>
</dbReference>
<dbReference type="HAMAP" id="MF_00131">
    <property type="entry name" value="Trp_synth_alpha"/>
    <property type="match status" value="1"/>
</dbReference>
<dbReference type="InterPro" id="IPR013785">
    <property type="entry name" value="Aldolase_TIM"/>
</dbReference>
<dbReference type="InterPro" id="IPR011060">
    <property type="entry name" value="RibuloseP-bd_barrel"/>
</dbReference>
<dbReference type="InterPro" id="IPR018204">
    <property type="entry name" value="Trp_synthase_alpha_AS"/>
</dbReference>
<dbReference type="InterPro" id="IPR002028">
    <property type="entry name" value="Trp_synthase_suA"/>
</dbReference>
<dbReference type="NCBIfam" id="TIGR00262">
    <property type="entry name" value="trpA"/>
    <property type="match status" value="1"/>
</dbReference>
<dbReference type="PANTHER" id="PTHR43406:SF1">
    <property type="entry name" value="TRYPTOPHAN SYNTHASE ALPHA CHAIN, CHLOROPLASTIC"/>
    <property type="match status" value="1"/>
</dbReference>
<dbReference type="PANTHER" id="PTHR43406">
    <property type="entry name" value="TRYPTOPHAN SYNTHASE, ALPHA CHAIN"/>
    <property type="match status" value="1"/>
</dbReference>
<dbReference type="Pfam" id="PF00290">
    <property type="entry name" value="Trp_syntA"/>
    <property type="match status" value="1"/>
</dbReference>
<dbReference type="SUPFAM" id="SSF51366">
    <property type="entry name" value="Ribulose-phoshate binding barrel"/>
    <property type="match status" value="1"/>
</dbReference>
<dbReference type="PROSITE" id="PS00167">
    <property type="entry name" value="TRP_SYNTHASE_ALPHA"/>
    <property type="match status" value="1"/>
</dbReference>
<feature type="chain" id="PRO_0000098784" description="Tryptophan synthase alpha chain">
    <location>
        <begin position="1"/>
        <end position="264"/>
    </location>
</feature>
<feature type="active site" description="Proton acceptor" evidence="1">
    <location>
        <position position="49"/>
    </location>
</feature>
<feature type="active site" description="Proton acceptor" evidence="1">
    <location>
        <position position="60"/>
    </location>
</feature>
<evidence type="ECO:0000255" key="1">
    <source>
        <dbReference type="HAMAP-Rule" id="MF_00131"/>
    </source>
</evidence>
<organism>
    <name type="scientific">Geobacter sulfurreducens (strain ATCC 51573 / DSM 12127 / PCA)</name>
    <dbReference type="NCBI Taxonomy" id="243231"/>
    <lineage>
        <taxon>Bacteria</taxon>
        <taxon>Pseudomonadati</taxon>
        <taxon>Thermodesulfobacteriota</taxon>
        <taxon>Desulfuromonadia</taxon>
        <taxon>Geobacterales</taxon>
        <taxon>Geobacteraceae</taxon>
        <taxon>Geobacter</taxon>
    </lineage>
</organism>
<proteinExistence type="inferred from homology"/>
<name>TRPA_GEOSL</name>
<reference key="1">
    <citation type="journal article" date="2003" name="Science">
        <title>Genome of Geobacter sulfurreducens: metal reduction in subsurface environments.</title>
        <authorList>
            <person name="Methe B.A."/>
            <person name="Nelson K.E."/>
            <person name="Eisen J.A."/>
            <person name="Paulsen I.T."/>
            <person name="Nelson W.C."/>
            <person name="Heidelberg J.F."/>
            <person name="Wu D."/>
            <person name="Wu M."/>
            <person name="Ward N.L."/>
            <person name="Beanan M.J."/>
            <person name="Dodson R.J."/>
            <person name="Madupu R."/>
            <person name="Brinkac L.M."/>
            <person name="Daugherty S.C."/>
            <person name="DeBoy R.T."/>
            <person name="Durkin A.S."/>
            <person name="Gwinn M.L."/>
            <person name="Kolonay J.F."/>
            <person name="Sullivan S.A."/>
            <person name="Haft D.H."/>
            <person name="Selengut J."/>
            <person name="Davidsen T.M."/>
            <person name="Zafar N."/>
            <person name="White O."/>
            <person name="Tran B."/>
            <person name="Romero C."/>
            <person name="Forberger H.A."/>
            <person name="Weidman J.F."/>
            <person name="Khouri H.M."/>
            <person name="Feldblyum T.V."/>
            <person name="Utterback T.R."/>
            <person name="Van Aken S.E."/>
            <person name="Lovley D.R."/>
            <person name="Fraser C.M."/>
        </authorList>
    </citation>
    <scope>NUCLEOTIDE SEQUENCE [LARGE SCALE GENOMIC DNA]</scope>
    <source>
        <strain>ATCC 51573 / DSM 12127 / PCA</strain>
    </source>
</reference>
<protein>
    <recommendedName>
        <fullName evidence="1">Tryptophan synthase alpha chain</fullName>
        <ecNumber evidence="1">4.2.1.20</ecNumber>
    </recommendedName>
</protein>
<sequence>MSRIAGTFAELKHNSRKALVTFITAGDPDLAATEALIPLLAESGADIVELGVPFSDPMADGPTIQLSSERALAAGTTLPKILDMVRRVRTRCQVPIVLMGYYNPILIHGLERFAADASAAGVDGVLLVDLPPEEAAEFKACADRHGLDVIFLLTPTSDEGRIRKVARQARGFVYYVSVTGVTGARSGVEASVSSNVAAIREAITVPVVVGFGISTPDQAAQVAASADGVVVGSAIVKLFERFTAAELGREVATFVSALREAIGN</sequence>
<gene>
    <name evidence="1" type="primary">trpA</name>
    <name type="ordered locus">GSU2371</name>
</gene>
<comment type="function">
    <text evidence="1">The alpha subunit is responsible for the aldol cleavage of indoleglycerol phosphate to indole and glyceraldehyde 3-phosphate.</text>
</comment>
<comment type="catalytic activity">
    <reaction evidence="1">
        <text>(1S,2R)-1-C-(indol-3-yl)glycerol 3-phosphate + L-serine = D-glyceraldehyde 3-phosphate + L-tryptophan + H2O</text>
        <dbReference type="Rhea" id="RHEA:10532"/>
        <dbReference type="ChEBI" id="CHEBI:15377"/>
        <dbReference type="ChEBI" id="CHEBI:33384"/>
        <dbReference type="ChEBI" id="CHEBI:57912"/>
        <dbReference type="ChEBI" id="CHEBI:58866"/>
        <dbReference type="ChEBI" id="CHEBI:59776"/>
        <dbReference type="EC" id="4.2.1.20"/>
    </reaction>
</comment>
<comment type="pathway">
    <text evidence="1">Amino-acid biosynthesis; L-tryptophan biosynthesis; L-tryptophan from chorismate: step 5/5.</text>
</comment>
<comment type="subunit">
    <text evidence="1">Tetramer of two alpha and two beta chains.</text>
</comment>
<comment type="similarity">
    <text evidence="1">Belongs to the TrpA family.</text>
</comment>
<keyword id="KW-0028">Amino-acid biosynthesis</keyword>
<keyword id="KW-0057">Aromatic amino acid biosynthesis</keyword>
<keyword id="KW-0456">Lyase</keyword>
<keyword id="KW-1185">Reference proteome</keyword>
<keyword id="KW-0822">Tryptophan biosynthesis</keyword>